<accession>Q53770</accession>
<protein>
    <recommendedName>
        <fullName>Tetracycline resistance protein TetM</fullName>
        <shortName>TetA(M)</shortName>
    </recommendedName>
</protein>
<organism>
    <name type="scientific">Staphylococcus aureus</name>
    <dbReference type="NCBI Taxonomy" id="1280"/>
    <lineage>
        <taxon>Bacteria</taxon>
        <taxon>Bacillati</taxon>
        <taxon>Bacillota</taxon>
        <taxon>Bacilli</taxon>
        <taxon>Bacillales</taxon>
        <taxon>Staphylococcaceae</taxon>
        <taxon>Staphylococcus</taxon>
    </lineage>
</organism>
<evidence type="ECO:0000250" key="1"/>
<evidence type="ECO:0000255" key="2">
    <source>
        <dbReference type="PROSITE-ProRule" id="PRU01059"/>
    </source>
</evidence>
<sequence>MKIINIGVLAHVDAGKTTLTESLLYNSGAITELGSVDKGTTRTDNTLLERQRGITIQTGITSFQWENTKVNIIDTPGHMDFLAEVYRSLSVLDGAILLISAKDFVQAQTRILFHALRKMGIPTIFFINKIDQNGIDLSTVYQDIKEKLSAEIVIKQKVELYPNMCVTNFTESEQWDTVIEGNDDLLEKYMSGKSLEALELEQEESIRFQNCSLFPLYHGSAKSNIGIDNLIEVITNKFYSSTHRGPSELCGNVFKIEYTKKRQRLAYIRLYSGVLHLRDSVRVSEKEKIKVTEMYTSINGELCKIDRAYSGEIVILQNEFLKLNSVLGDTKLLPQRKKIENPHPLLQTTVEPSKPEQREMLLDALLEISDSDPLLRYYVDSTTHEIILSFLGKVQMEVISALLQEKYHVEIELKEPTVIYMERPLKNAEYTIHIEVPPNPFWASIGLSVSPLPLGSGMQYESSVSLGYLNQSFQNAVMEGIRYGCEQGLYGWNVTDCKICFKYGLYYSPVSTPADFRMLTPIVLEQAFRKAGTELLEPYLSFKVYAPQEYLSRAYNDAPKYCANIVNTQLKNNEVIIIGEIPARCIQDYRNDLTFFTNGLSVCLAELKGYQVTTGEPVCQTRRLNSRIDKVRYMFNKIT</sequence>
<reference key="1">
    <citation type="journal article" date="1990" name="Antimicrob. Agents Chemother.">
        <title>Cloning and nucleotide sequence of a chromosomally encoded tetracycline resistance determinant, tetA(M), from a pathogenic, methicillin-resistant strain of Staphylococcus aureus.</title>
        <authorList>
            <person name="Nesin M."/>
            <person name="Svec P."/>
            <person name="Lupski J.R."/>
            <person name="Godson G.N."/>
            <person name="Kreiswirth B."/>
            <person name="Projan S.J."/>
        </authorList>
    </citation>
    <scope>NUCLEOTIDE SEQUENCE [GENOMIC DNA]</scope>
</reference>
<name>TETM_STAAU</name>
<feature type="chain" id="PRO_0000091500" description="Tetracycline resistance protein TetM">
    <location>
        <begin position="1"/>
        <end position="639"/>
    </location>
</feature>
<feature type="domain" description="tr-type G" evidence="2">
    <location>
        <begin position="1"/>
        <end position="242"/>
    </location>
</feature>
<feature type="binding site" evidence="1">
    <location>
        <begin position="10"/>
        <end position="17"/>
    </location>
    <ligand>
        <name>GTP</name>
        <dbReference type="ChEBI" id="CHEBI:37565"/>
    </ligand>
</feature>
<feature type="binding site" evidence="1">
    <location>
        <begin position="74"/>
        <end position="78"/>
    </location>
    <ligand>
        <name>GTP</name>
        <dbReference type="ChEBI" id="CHEBI:37565"/>
    </ligand>
</feature>
<feature type="binding site" evidence="1">
    <location>
        <begin position="128"/>
        <end position="131"/>
    </location>
    <ligand>
        <name>GTP</name>
        <dbReference type="ChEBI" id="CHEBI:37565"/>
    </ligand>
</feature>
<proteinExistence type="inferred from homology"/>
<dbReference type="EMBL" id="M21136">
    <property type="protein sequence ID" value="AAA26678.1"/>
    <property type="molecule type" value="Genomic_DNA"/>
</dbReference>
<dbReference type="PIR" id="A60633">
    <property type="entry name" value="A60633"/>
</dbReference>
<dbReference type="RefSeq" id="WP_063856108.1">
    <property type="nucleotide sequence ID" value="NG_048214.1"/>
</dbReference>
<dbReference type="SMR" id="Q53770"/>
<dbReference type="GO" id="GO:0005525">
    <property type="term" value="F:GTP binding"/>
    <property type="evidence" value="ECO:0007669"/>
    <property type="project" value="UniProtKB-KW"/>
</dbReference>
<dbReference type="GO" id="GO:0003924">
    <property type="term" value="F:GTPase activity"/>
    <property type="evidence" value="ECO:0007669"/>
    <property type="project" value="InterPro"/>
</dbReference>
<dbReference type="GO" id="GO:0046677">
    <property type="term" value="P:response to antibiotic"/>
    <property type="evidence" value="ECO:0007669"/>
    <property type="project" value="UniProtKB-KW"/>
</dbReference>
<dbReference type="GO" id="GO:0032790">
    <property type="term" value="P:ribosome disassembly"/>
    <property type="evidence" value="ECO:0007669"/>
    <property type="project" value="TreeGrafter"/>
</dbReference>
<dbReference type="GO" id="GO:0006412">
    <property type="term" value="P:translation"/>
    <property type="evidence" value="ECO:0007669"/>
    <property type="project" value="UniProtKB-KW"/>
</dbReference>
<dbReference type="CDD" id="cd03711">
    <property type="entry name" value="Tet_C"/>
    <property type="match status" value="1"/>
</dbReference>
<dbReference type="CDD" id="cd03690">
    <property type="entry name" value="Tet_II"/>
    <property type="match status" value="1"/>
</dbReference>
<dbReference type="CDD" id="cd16258">
    <property type="entry name" value="Tet_III"/>
    <property type="match status" value="1"/>
</dbReference>
<dbReference type="CDD" id="cd01684">
    <property type="entry name" value="Tet_like_IV"/>
    <property type="match status" value="1"/>
</dbReference>
<dbReference type="CDD" id="cd04168">
    <property type="entry name" value="TetM_like"/>
    <property type="match status" value="1"/>
</dbReference>
<dbReference type="Gene3D" id="3.30.230.10">
    <property type="match status" value="1"/>
</dbReference>
<dbReference type="Gene3D" id="3.30.70.240">
    <property type="match status" value="1"/>
</dbReference>
<dbReference type="Gene3D" id="3.30.70.870">
    <property type="entry name" value="Elongation Factor G (Translational Gtpase), domain 3"/>
    <property type="match status" value="1"/>
</dbReference>
<dbReference type="Gene3D" id="3.40.50.300">
    <property type="entry name" value="P-loop containing nucleotide triphosphate hydrolases"/>
    <property type="match status" value="1"/>
</dbReference>
<dbReference type="Gene3D" id="2.40.30.10">
    <property type="entry name" value="Translation factors"/>
    <property type="match status" value="1"/>
</dbReference>
<dbReference type="InterPro" id="IPR053905">
    <property type="entry name" value="EF-G-like_DII"/>
</dbReference>
<dbReference type="InterPro" id="IPR041095">
    <property type="entry name" value="EFG_II"/>
</dbReference>
<dbReference type="InterPro" id="IPR035647">
    <property type="entry name" value="EFG_III/V"/>
</dbReference>
<dbReference type="InterPro" id="IPR000640">
    <property type="entry name" value="EFG_V-like"/>
</dbReference>
<dbReference type="InterPro" id="IPR031157">
    <property type="entry name" value="G_TR_CS"/>
</dbReference>
<dbReference type="InterPro" id="IPR027417">
    <property type="entry name" value="P-loop_NTPase"/>
</dbReference>
<dbReference type="InterPro" id="IPR020568">
    <property type="entry name" value="Ribosomal_Su5_D2-typ_SF"/>
</dbReference>
<dbReference type="InterPro" id="IPR014721">
    <property type="entry name" value="Ribsml_uS5_D2-typ_fold_subgr"/>
</dbReference>
<dbReference type="InterPro" id="IPR005225">
    <property type="entry name" value="Small_GTP-bd"/>
</dbReference>
<dbReference type="InterPro" id="IPR000795">
    <property type="entry name" value="T_Tr_GTP-bd_dom"/>
</dbReference>
<dbReference type="InterPro" id="IPR035650">
    <property type="entry name" value="Tet_C"/>
</dbReference>
<dbReference type="InterPro" id="IPR009000">
    <property type="entry name" value="Transl_B-barrel_sf"/>
</dbReference>
<dbReference type="InterPro" id="IPR005517">
    <property type="entry name" value="Transl_elong_EFG/EF2_IV"/>
</dbReference>
<dbReference type="NCBIfam" id="TIGR00231">
    <property type="entry name" value="small_GTP"/>
    <property type="match status" value="1"/>
</dbReference>
<dbReference type="NCBIfam" id="NF012153">
    <property type="entry name" value="tet_protect"/>
    <property type="match status" value="1"/>
</dbReference>
<dbReference type="NCBIfam" id="NF012155">
    <property type="entry name" value="tet_protect_M"/>
    <property type="match status" value="1"/>
</dbReference>
<dbReference type="NCBIfam" id="NF033148">
    <property type="entry name" value="tet_protect_M_W"/>
    <property type="match status" value="1"/>
</dbReference>
<dbReference type="PANTHER" id="PTHR43261:SF1">
    <property type="entry name" value="RIBOSOME-RELEASING FACTOR 2, MITOCHONDRIAL"/>
    <property type="match status" value="1"/>
</dbReference>
<dbReference type="PANTHER" id="PTHR43261">
    <property type="entry name" value="TRANSLATION ELONGATION FACTOR G-RELATED"/>
    <property type="match status" value="1"/>
</dbReference>
<dbReference type="Pfam" id="PF22042">
    <property type="entry name" value="EF-G_D2"/>
    <property type="match status" value="1"/>
</dbReference>
<dbReference type="Pfam" id="PF00679">
    <property type="entry name" value="EFG_C"/>
    <property type="match status" value="1"/>
</dbReference>
<dbReference type="Pfam" id="PF14492">
    <property type="entry name" value="EFG_III"/>
    <property type="match status" value="1"/>
</dbReference>
<dbReference type="Pfam" id="PF03764">
    <property type="entry name" value="EFG_IV"/>
    <property type="match status" value="1"/>
</dbReference>
<dbReference type="Pfam" id="PF00009">
    <property type="entry name" value="GTP_EFTU"/>
    <property type="match status" value="1"/>
</dbReference>
<dbReference type="PRINTS" id="PR00315">
    <property type="entry name" value="ELONGATNFCT"/>
</dbReference>
<dbReference type="PRINTS" id="PR01037">
    <property type="entry name" value="TCRTETOQM"/>
</dbReference>
<dbReference type="SMART" id="SM00889">
    <property type="entry name" value="EFG_IV"/>
    <property type="match status" value="1"/>
</dbReference>
<dbReference type="SUPFAM" id="SSF54980">
    <property type="entry name" value="EF-G C-terminal domain-like"/>
    <property type="match status" value="2"/>
</dbReference>
<dbReference type="SUPFAM" id="SSF52540">
    <property type="entry name" value="P-loop containing nucleoside triphosphate hydrolases"/>
    <property type="match status" value="1"/>
</dbReference>
<dbReference type="SUPFAM" id="SSF54211">
    <property type="entry name" value="Ribosomal protein S5 domain 2-like"/>
    <property type="match status" value="1"/>
</dbReference>
<dbReference type="SUPFAM" id="SSF50447">
    <property type="entry name" value="Translation proteins"/>
    <property type="match status" value="1"/>
</dbReference>
<dbReference type="PROSITE" id="PS00301">
    <property type="entry name" value="G_TR_1"/>
    <property type="match status" value="1"/>
</dbReference>
<dbReference type="PROSITE" id="PS51722">
    <property type="entry name" value="G_TR_2"/>
    <property type="match status" value="1"/>
</dbReference>
<keyword id="KW-0046">Antibiotic resistance</keyword>
<keyword id="KW-0342">GTP-binding</keyword>
<keyword id="KW-0547">Nucleotide-binding</keyword>
<keyword id="KW-0648">Protein biosynthesis</keyword>
<comment type="function">
    <text>Abolishes the inhibitory effect of tetracyclin on protein synthesis by a non-covalent modification of the ribosomes.</text>
</comment>
<comment type="similarity">
    <text evidence="2">Belongs to the TRAFAC class translation factor GTPase superfamily. Classic translation factor GTPase family. TetM/TetO subfamily.</text>
</comment>
<gene>
    <name type="primary">tetM</name>
    <name type="synonym">tetA(M)</name>
</gene>